<sequence>MGKGTGSFGKRRNKSHTLCVRCGRRSFHIQKSRCSACAYPAARKRTYNWSVKAIRRKTTGTGRMRYLRNVPRRFKTGFREGTEAKPRSKASASSA</sequence>
<organism>
    <name type="scientific">Arabidopsis thaliana</name>
    <name type="common">Mouse-ear cress</name>
    <dbReference type="NCBI Taxonomy" id="3702"/>
    <lineage>
        <taxon>Eukaryota</taxon>
        <taxon>Viridiplantae</taxon>
        <taxon>Streptophyta</taxon>
        <taxon>Embryophyta</taxon>
        <taxon>Tracheophyta</taxon>
        <taxon>Spermatophyta</taxon>
        <taxon>Magnoliopsida</taxon>
        <taxon>eudicotyledons</taxon>
        <taxon>Gunneridae</taxon>
        <taxon>Pentapetalae</taxon>
        <taxon>rosids</taxon>
        <taxon>malvids</taxon>
        <taxon>Brassicales</taxon>
        <taxon>Brassicaceae</taxon>
        <taxon>Camelineae</taxon>
        <taxon>Arabidopsis</taxon>
    </lineage>
</organism>
<evidence type="ECO:0000250" key="1"/>
<evidence type="ECO:0000255" key="2"/>
<evidence type="ECO:0000256" key="3">
    <source>
        <dbReference type="SAM" id="MobiDB-lite"/>
    </source>
</evidence>
<evidence type="ECO:0000303" key="4">
    <source>
    </source>
</evidence>
<evidence type="ECO:0000305" key="5"/>
<accession>Q8LEM8</accession>
<reference key="1">
    <citation type="journal article" date="2000" name="DNA Res.">
        <title>Structural analysis of Arabidopsis thaliana chromosome 3. I. Sequence features of the regions of 4,504,864 bp covered by sixty P1 and TAC clones.</title>
        <authorList>
            <person name="Sato S."/>
            <person name="Nakamura Y."/>
            <person name="Kaneko T."/>
            <person name="Katoh T."/>
            <person name="Asamizu E."/>
            <person name="Tabata S."/>
        </authorList>
    </citation>
    <scope>NUCLEOTIDE SEQUENCE [LARGE SCALE GENOMIC DNA]</scope>
    <source>
        <strain>cv. Columbia</strain>
    </source>
</reference>
<reference key="2">
    <citation type="journal article" date="2017" name="Plant J.">
        <title>Araport11: a complete reannotation of the Arabidopsis thaliana reference genome.</title>
        <authorList>
            <person name="Cheng C.Y."/>
            <person name="Krishnakumar V."/>
            <person name="Chan A.P."/>
            <person name="Thibaud-Nissen F."/>
            <person name="Schobel S."/>
            <person name="Town C.D."/>
        </authorList>
    </citation>
    <scope>GENOME REANNOTATION</scope>
    <source>
        <strain>cv. Columbia</strain>
    </source>
</reference>
<reference key="3">
    <citation type="submission" date="2002-03" db="EMBL/GenBank/DDBJ databases">
        <title>Full-length cDNA from Arabidopsis thaliana.</title>
        <authorList>
            <person name="Brover V.V."/>
            <person name="Troukhan M.E."/>
            <person name="Alexandrov N.A."/>
            <person name="Lu Y.-P."/>
            <person name="Flavell R.B."/>
            <person name="Feldmann K.A."/>
        </authorList>
    </citation>
    <scope>NUCLEOTIDE SEQUENCE [LARGE SCALE MRNA]</scope>
</reference>
<reference key="4">
    <citation type="submission" date="2006-05" db="EMBL/GenBank/DDBJ databases">
        <title>Arabidopsis ORF clones.</title>
        <authorList>
            <person name="Quinitio C."/>
            <person name="Chen H."/>
            <person name="Kim C.J."/>
            <person name="Shinn P."/>
            <person name="Ecker J.R."/>
        </authorList>
    </citation>
    <scope>NUCLEOTIDE SEQUENCE [LARGE SCALE MRNA]</scope>
    <source>
        <strain>cv. Columbia</strain>
    </source>
</reference>
<reference key="5">
    <citation type="journal article" date="2001" name="Plant Physiol.">
        <title>The organization of cytoplasmic ribosomal protein genes in the Arabidopsis genome.</title>
        <authorList>
            <person name="Barakat A."/>
            <person name="Szick-Miranda K."/>
            <person name="Chang I.-F."/>
            <person name="Guyot R."/>
            <person name="Blanc G."/>
            <person name="Cooke R."/>
            <person name="Delseny M."/>
            <person name="Bailey-Serres J."/>
        </authorList>
    </citation>
    <scope>GENE FAMILY ORGANIZATION</scope>
    <scope>NOMENCLATURE</scope>
</reference>
<reference key="6">
    <citation type="journal article" date="2023" name="Plant Cell">
        <title>An updated nomenclature for plant ribosomal protein genes.</title>
        <authorList>
            <person name="Scarpin M.R."/>
            <person name="Busche M."/>
            <person name="Martinez R.E."/>
            <person name="Harper L.C."/>
            <person name="Reiser L."/>
            <person name="Szakonyi D."/>
            <person name="Merchante C."/>
            <person name="Lan T."/>
            <person name="Xiong W."/>
            <person name="Mo B."/>
            <person name="Tang G."/>
            <person name="Chen X."/>
            <person name="Bailey-Serres J."/>
            <person name="Browning K.S."/>
            <person name="Brunkard J.O."/>
        </authorList>
    </citation>
    <scope>NOMENCLATURE</scope>
</reference>
<name>RL373_ARATH</name>
<gene>
    <name type="primary">RPL37C</name>
    <name type="ordered locus">At3g16080</name>
    <name type="ORF">MSL1.12</name>
</gene>
<protein>
    <recommendedName>
        <fullName evidence="4">Large ribosomal subunit protein eL37x</fullName>
    </recommendedName>
    <alternativeName>
        <fullName>60S ribosomal protein L37-3</fullName>
    </alternativeName>
</protein>
<feature type="chain" id="PRO_0000245494" description="Large ribosomal subunit protein eL37x">
    <location>
        <begin position="1"/>
        <end position="95"/>
    </location>
</feature>
<feature type="zinc finger region" description="C4-type" evidence="2">
    <location>
        <begin position="19"/>
        <end position="37"/>
    </location>
</feature>
<feature type="region of interest" description="Disordered" evidence="3">
    <location>
        <begin position="73"/>
        <end position="95"/>
    </location>
</feature>
<feature type="compositionally biased region" description="Basic and acidic residues" evidence="3">
    <location>
        <begin position="77"/>
        <end position="86"/>
    </location>
</feature>
<feature type="binding site" evidence="1">
    <location>
        <position position="19"/>
    </location>
    <ligand>
        <name>Zn(2+)</name>
        <dbReference type="ChEBI" id="CHEBI:29105"/>
    </ligand>
</feature>
<feature type="binding site" evidence="1">
    <location>
        <position position="22"/>
    </location>
    <ligand>
        <name>Zn(2+)</name>
        <dbReference type="ChEBI" id="CHEBI:29105"/>
    </ligand>
</feature>
<feature type="binding site" evidence="1">
    <location>
        <position position="34"/>
    </location>
    <ligand>
        <name>Zn(2+)</name>
        <dbReference type="ChEBI" id="CHEBI:29105"/>
    </ligand>
</feature>
<feature type="binding site" evidence="1">
    <location>
        <position position="37"/>
    </location>
    <ligand>
        <name>Zn(2+)</name>
        <dbReference type="ChEBI" id="CHEBI:29105"/>
    </ligand>
</feature>
<keyword id="KW-0479">Metal-binding</keyword>
<keyword id="KW-1185">Reference proteome</keyword>
<keyword id="KW-0687">Ribonucleoprotein</keyword>
<keyword id="KW-0689">Ribosomal protein</keyword>
<keyword id="KW-0694">RNA-binding</keyword>
<keyword id="KW-0699">rRNA-binding</keyword>
<keyword id="KW-0862">Zinc</keyword>
<keyword id="KW-0863">Zinc-finger</keyword>
<comment type="function">
    <text evidence="1">Binds to the 23S rRNA.</text>
</comment>
<comment type="cofactor">
    <cofactor evidence="1">
        <name>Zn(2+)</name>
        <dbReference type="ChEBI" id="CHEBI:29105"/>
    </cofactor>
    <text evidence="1">Binds 1 zinc ion per subunit.</text>
</comment>
<comment type="similarity">
    <text evidence="5">Belongs to the eukaryotic ribosomal protein eL37 family.</text>
</comment>
<proteinExistence type="inferred from homology"/>
<dbReference type="EMBL" id="AB012247">
    <property type="status" value="NOT_ANNOTATED_CDS"/>
    <property type="molecule type" value="Genomic_DNA"/>
</dbReference>
<dbReference type="EMBL" id="CP002686">
    <property type="protein sequence ID" value="AEE75769.1"/>
    <property type="molecule type" value="Genomic_DNA"/>
</dbReference>
<dbReference type="EMBL" id="AY085343">
    <property type="protein sequence ID" value="AAM62574.1"/>
    <property type="molecule type" value="mRNA"/>
</dbReference>
<dbReference type="EMBL" id="BT025571">
    <property type="protein sequence ID" value="ABF58989.1"/>
    <property type="molecule type" value="mRNA"/>
</dbReference>
<dbReference type="RefSeq" id="NP_566535.1">
    <property type="nucleotide sequence ID" value="NM_112478.4"/>
</dbReference>
<dbReference type="SMR" id="Q8LEM8"/>
<dbReference type="BioGRID" id="6187">
    <property type="interactions" value="62"/>
</dbReference>
<dbReference type="FunCoup" id="Q8LEM8">
    <property type="interactions" value="1922"/>
</dbReference>
<dbReference type="STRING" id="3702.Q8LEM8"/>
<dbReference type="PaxDb" id="3702-AT3G16080.1"/>
<dbReference type="EnsemblPlants" id="AT3G16080.1">
    <property type="protein sequence ID" value="AT3G16080.1"/>
    <property type="gene ID" value="AT3G16080"/>
</dbReference>
<dbReference type="GeneID" id="820853"/>
<dbReference type="Gramene" id="AT3G16080.1">
    <property type="protein sequence ID" value="AT3G16080.1"/>
    <property type="gene ID" value="AT3G16080"/>
</dbReference>
<dbReference type="KEGG" id="ath:AT3G16080"/>
<dbReference type="Araport" id="AT3G16080"/>
<dbReference type="TAIR" id="AT3G16080"/>
<dbReference type="eggNOG" id="KOG3475">
    <property type="taxonomic scope" value="Eukaryota"/>
</dbReference>
<dbReference type="HOGENOM" id="CLU_150908_0_0_1"/>
<dbReference type="InParanoid" id="Q8LEM8"/>
<dbReference type="OMA" id="RMAYLKH"/>
<dbReference type="OrthoDB" id="528079at2759"/>
<dbReference type="PhylomeDB" id="Q8LEM8"/>
<dbReference type="PRO" id="PR:Q8LEM8"/>
<dbReference type="Proteomes" id="UP000006548">
    <property type="component" value="Chromosome 3"/>
</dbReference>
<dbReference type="ExpressionAtlas" id="Q8LEM8">
    <property type="expression patterns" value="baseline and differential"/>
</dbReference>
<dbReference type="GO" id="GO:0005829">
    <property type="term" value="C:cytosol"/>
    <property type="evidence" value="ECO:0007005"/>
    <property type="project" value="TAIR"/>
</dbReference>
<dbReference type="GO" id="GO:0022625">
    <property type="term" value="C:cytosolic large ribosomal subunit"/>
    <property type="evidence" value="ECO:0007005"/>
    <property type="project" value="TAIR"/>
</dbReference>
<dbReference type="GO" id="GO:0003729">
    <property type="term" value="F:mRNA binding"/>
    <property type="evidence" value="ECO:0000314"/>
    <property type="project" value="TAIR"/>
</dbReference>
<dbReference type="GO" id="GO:0019843">
    <property type="term" value="F:rRNA binding"/>
    <property type="evidence" value="ECO:0007669"/>
    <property type="project" value="UniProtKB-KW"/>
</dbReference>
<dbReference type="GO" id="GO:0003735">
    <property type="term" value="F:structural constituent of ribosome"/>
    <property type="evidence" value="ECO:0000314"/>
    <property type="project" value="CAFA"/>
</dbReference>
<dbReference type="GO" id="GO:0008270">
    <property type="term" value="F:zinc ion binding"/>
    <property type="evidence" value="ECO:0007669"/>
    <property type="project" value="UniProtKB-KW"/>
</dbReference>
<dbReference type="GO" id="GO:0006412">
    <property type="term" value="P:translation"/>
    <property type="evidence" value="ECO:0007669"/>
    <property type="project" value="InterPro"/>
</dbReference>
<dbReference type="FunFam" id="2.20.25.30:FF:000001">
    <property type="entry name" value="Ribosomal protein L37"/>
    <property type="match status" value="1"/>
</dbReference>
<dbReference type="Gene3D" id="2.20.25.30">
    <property type="match status" value="1"/>
</dbReference>
<dbReference type="InterPro" id="IPR001569">
    <property type="entry name" value="Ribosomal_eL37"/>
</dbReference>
<dbReference type="InterPro" id="IPR011331">
    <property type="entry name" value="Ribosomal_eL37/eL43"/>
</dbReference>
<dbReference type="InterPro" id="IPR018267">
    <property type="entry name" value="Ribosomal_eL37_CS"/>
</dbReference>
<dbReference type="InterPro" id="IPR011332">
    <property type="entry name" value="Ribosomal_zn-bd"/>
</dbReference>
<dbReference type="PANTHER" id="PTHR10768">
    <property type="entry name" value="60S RIBOSOMAL PROTEIN L37"/>
    <property type="match status" value="1"/>
</dbReference>
<dbReference type="PANTHER" id="PTHR10768:SF25">
    <property type="entry name" value="LARGE RIBOSOMAL SUBUNIT PROTEIN EL37X-RELATED"/>
    <property type="match status" value="1"/>
</dbReference>
<dbReference type="Pfam" id="PF01907">
    <property type="entry name" value="Ribosomal_L37e"/>
    <property type="match status" value="1"/>
</dbReference>
<dbReference type="SUPFAM" id="SSF57829">
    <property type="entry name" value="Zn-binding ribosomal proteins"/>
    <property type="match status" value="1"/>
</dbReference>
<dbReference type="PROSITE" id="PS01077">
    <property type="entry name" value="RIBOSOMAL_L37E"/>
    <property type="match status" value="1"/>
</dbReference>